<name>PVK1_PANSB</name>
<organism>
    <name type="scientific">Panesthia sp. (strain BF-2008)</name>
    <name type="common">Cockroach</name>
    <dbReference type="NCBI Taxonomy" id="521518"/>
    <lineage>
        <taxon>Eukaryota</taxon>
        <taxon>Metazoa</taxon>
        <taxon>Ecdysozoa</taxon>
        <taxon>Arthropoda</taxon>
        <taxon>Hexapoda</taxon>
        <taxon>Insecta</taxon>
        <taxon>Pterygota</taxon>
        <taxon>Neoptera</taxon>
        <taxon>Polyneoptera</taxon>
        <taxon>Dictyoptera</taxon>
        <taxon>Blattodea</taxon>
        <taxon>Blaberoidea</taxon>
        <taxon>Blaberidae</taxon>
        <taxon>Panesthiinae</taxon>
        <taxon>Panesthia</taxon>
    </lineage>
</organism>
<protein>
    <recommendedName>
        <fullName evidence="3">Periviscerokinin-1</fullName>
        <shortName evidence="3">PanS2-PVK-1</shortName>
    </recommendedName>
</protein>
<feature type="peptide" id="PRO_0000378754" description="Periviscerokinin-1" evidence="2">
    <location>
        <begin position="1"/>
        <end position="11"/>
    </location>
</feature>
<feature type="modified residue" description="Threonine amide" evidence="2">
    <location>
        <position position="11"/>
    </location>
</feature>
<dbReference type="GO" id="GO:0005576">
    <property type="term" value="C:extracellular region"/>
    <property type="evidence" value="ECO:0007669"/>
    <property type="project" value="UniProtKB-SubCell"/>
</dbReference>
<dbReference type="GO" id="GO:0007218">
    <property type="term" value="P:neuropeptide signaling pathway"/>
    <property type="evidence" value="ECO:0007669"/>
    <property type="project" value="UniProtKB-KW"/>
</dbReference>
<dbReference type="InterPro" id="IPR013231">
    <property type="entry name" value="Periviscerokinin"/>
</dbReference>
<dbReference type="Pfam" id="PF08259">
    <property type="entry name" value="Periviscerokin"/>
    <property type="match status" value="1"/>
</dbReference>
<sequence>GSSGLIPFGRT</sequence>
<keyword id="KW-0027">Amidation</keyword>
<keyword id="KW-0903">Direct protein sequencing</keyword>
<keyword id="KW-0527">Neuropeptide</keyword>
<keyword id="KW-0964">Secreted</keyword>
<accession>P85687</accession>
<evidence type="ECO:0000255" key="1"/>
<evidence type="ECO:0000269" key="2">
    <source>
    </source>
</evidence>
<evidence type="ECO:0000303" key="3">
    <source>
    </source>
</evidence>
<evidence type="ECO:0000305" key="4"/>
<proteinExistence type="evidence at protein level"/>
<comment type="function">
    <text evidence="4">Mediates visceral muscle contractile activity (myotropic activity).</text>
</comment>
<comment type="subcellular location">
    <subcellularLocation>
        <location evidence="4">Secreted</location>
    </subcellularLocation>
</comment>
<comment type="similarity">
    <text evidence="1">Belongs to the periviscerokinin family.</text>
</comment>
<reference evidence="4" key="1">
    <citation type="journal article" date="2009" name="BMC Evol. Biol.">
        <title>A proteomic approach for studying insect phylogeny: CAPA peptides of ancient insect taxa (Dictyoptera, Blattoptera) as a test case.</title>
        <authorList>
            <person name="Roth S."/>
            <person name="Fromm B."/>
            <person name="Gaede G."/>
            <person name="Predel R."/>
        </authorList>
    </citation>
    <scope>PROTEIN SEQUENCE</scope>
    <scope>AMIDATION AT THR-11</scope>
    <source>
        <tissue evidence="2">Abdominal perisympathetic organs</tissue>
    </source>
</reference>